<name>CODY_STRPS</name>
<protein>
    <recommendedName>
        <fullName evidence="1">Global transcriptional regulator CodY</fullName>
    </recommendedName>
</protein>
<organism>
    <name type="scientific">Streptococcus pneumoniae (strain CGSP14)</name>
    <dbReference type="NCBI Taxonomy" id="516950"/>
    <lineage>
        <taxon>Bacteria</taxon>
        <taxon>Bacillati</taxon>
        <taxon>Bacillota</taxon>
        <taxon>Bacilli</taxon>
        <taxon>Lactobacillales</taxon>
        <taxon>Streptococcaceae</taxon>
        <taxon>Streptococcus</taxon>
    </lineage>
</organism>
<reference key="1">
    <citation type="journal article" date="2009" name="BMC Genomics">
        <title>Genome evolution driven by host adaptations results in a more virulent and antimicrobial-resistant Streptococcus pneumoniae serotype 14.</title>
        <authorList>
            <person name="Ding F."/>
            <person name="Tang P."/>
            <person name="Hsu M.-H."/>
            <person name="Cui P."/>
            <person name="Hu S."/>
            <person name="Yu J."/>
            <person name="Chiu C.-H."/>
        </authorList>
    </citation>
    <scope>NUCLEOTIDE SEQUENCE [LARGE SCALE GENOMIC DNA]</scope>
    <source>
        <strain>CGSP14</strain>
    </source>
</reference>
<comment type="function">
    <text evidence="1">DNA-binding global transcriptional regulator which is involved in the adaptive response to starvation and acts by directly or indirectly controlling the expression of numerous genes in response to nutrient availability. During rapid exponential growth, CodY is highly active and represses genes whose products allow adaptation to nutrient depletion.</text>
</comment>
<comment type="subcellular location">
    <subcellularLocation>
        <location evidence="1">Cytoplasm</location>
    </subcellularLocation>
</comment>
<comment type="similarity">
    <text evidence="1">Belongs to the CodY family.</text>
</comment>
<sequence length="262" mass="29756">MAHLLEKTRKITSILKRSEEQLQDELPYNAITRQLADIIHCNACIINSKGRLLGYFMRYKTNTDRVEQFFQTKIFPDDYVQGANMIYETEANLPVEHDMSIFPVESRDDFPDGLTTIAPIHVSGIRLGSLIIWRNDKKFEDEDLVLVEIASTVVGIQLLNFQREEDEKNIRRRTAVTMAVNTLSYSELRAVSAILGELNGNEGKLTASVIADRIGITRSVIVNALRKLESAGIIESRSLGMKGTYLKVLISDIFEEVKKRDY</sequence>
<evidence type="ECO:0000255" key="1">
    <source>
        <dbReference type="HAMAP-Rule" id="MF_00621"/>
    </source>
</evidence>
<dbReference type="EMBL" id="CP001033">
    <property type="protein sequence ID" value="ACB90819.1"/>
    <property type="molecule type" value="Genomic_DNA"/>
</dbReference>
<dbReference type="RefSeq" id="WP_000940733.1">
    <property type="nucleotide sequence ID" value="NC_010582.1"/>
</dbReference>
<dbReference type="SMR" id="B2IRA0"/>
<dbReference type="GeneID" id="45653181"/>
<dbReference type="KEGG" id="spw:SPCG_1567"/>
<dbReference type="HOGENOM" id="CLU_089581_0_0_9"/>
<dbReference type="GO" id="GO:0005737">
    <property type="term" value="C:cytoplasm"/>
    <property type="evidence" value="ECO:0007669"/>
    <property type="project" value="UniProtKB-SubCell"/>
</dbReference>
<dbReference type="GO" id="GO:0003677">
    <property type="term" value="F:DNA binding"/>
    <property type="evidence" value="ECO:0007669"/>
    <property type="project" value="UniProtKB-UniRule"/>
</dbReference>
<dbReference type="GO" id="GO:0003700">
    <property type="term" value="F:DNA-binding transcription factor activity"/>
    <property type="evidence" value="ECO:0007669"/>
    <property type="project" value="InterPro"/>
</dbReference>
<dbReference type="GO" id="GO:0005525">
    <property type="term" value="F:GTP binding"/>
    <property type="evidence" value="ECO:0007669"/>
    <property type="project" value="InterPro"/>
</dbReference>
<dbReference type="GO" id="GO:0045892">
    <property type="term" value="P:negative regulation of DNA-templated transcription"/>
    <property type="evidence" value="ECO:0007669"/>
    <property type="project" value="UniProtKB-UniRule"/>
</dbReference>
<dbReference type="CDD" id="cd00090">
    <property type="entry name" value="HTH_ARSR"/>
    <property type="match status" value="1"/>
</dbReference>
<dbReference type="FunFam" id="1.10.10.10:FF:000034">
    <property type="entry name" value="GTP-sensing transcriptional pleiotropic repressor CodY"/>
    <property type="match status" value="1"/>
</dbReference>
<dbReference type="FunFam" id="3.30.450.40:FF:000003">
    <property type="entry name" value="GTP-sensing transcriptional pleiotropic repressor CodY"/>
    <property type="match status" value="1"/>
</dbReference>
<dbReference type="Gene3D" id="3.30.450.40">
    <property type="match status" value="1"/>
</dbReference>
<dbReference type="Gene3D" id="1.10.10.10">
    <property type="entry name" value="Winged helix-like DNA-binding domain superfamily/Winged helix DNA-binding domain"/>
    <property type="match status" value="1"/>
</dbReference>
<dbReference type="HAMAP" id="MF_00621">
    <property type="entry name" value="HTH_type_CodY"/>
    <property type="match status" value="1"/>
</dbReference>
<dbReference type="InterPro" id="IPR011991">
    <property type="entry name" value="ArsR-like_HTH"/>
</dbReference>
<dbReference type="InterPro" id="IPR014154">
    <property type="entry name" value="CodY"/>
</dbReference>
<dbReference type="InterPro" id="IPR029016">
    <property type="entry name" value="GAF-like_dom_sf"/>
</dbReference>
<dbReference type="InterPro" id="IPR013198">
    <property type="entry name" value="GTP_trans_reg_CodY_C"/>
</dbReference>
<dbReference type="InterPro" id="IPR010312">
    <property type="entry name" value="Transc_reg_CodY_N"/>
</dbReference>
<dbReference type="InterPro" id="IPR036388">
    <property type="entry name" value="WH-like_DNA-bd_sf"/>
</dbReference>
<dbReference type="InterPro" id="IPR036390">
    <property type="entry name" value="WH_DNA-bd_sf"/>
</dbReference>
<dbReference type="NCBIfam" id="TIGR02787">
    <property type="entry name" value="codY_Gpos"/>
    <property type="match status" value="1"/>
</dbReference>
<dbReference type="NCBIfam" id="NF003170">
    <property type="entry name" value="PRK04158.1"/>
    <property type="match status" value="1"/>
</dbReference>
<dbReference type="PANTHER" id="PTHR40062:SF1">
    <property type="entry name" value="GLOBAL TRANSCRIPTIONAL REGULATOR CODY"/>
    <property type="match status" value="1"/>
</dbReference>
<dbReference type="PANTHER" id="PTHR40062">
    <property type="entry name" value="GTP-SENSING TRANSCRIPTIONAL PLEIOTROPIC REPRESSOR CODY"/>
    <property type="match status" value="1"/>
</dbReference>
<dbReference type="Pfam" id="PF06018">
    <property type="entry name" value="CodY"/>
    <property type="match status" value="1"/>
</dbReference>
<dbReference type="Pfam" id="PF08222">
    <property type="entry name" value="HTH_CodY"/>
    <property type="match status" value="1"/>
</dbReference>
<dbReference type="PIRSF" id="PIRSF011572">
    <property type="entry name" value="GTP_sensing_CodY"/>
    <property type="match status" value="1"/>
</dbReference>
<dbReference type="SUPFAM" id="SSF46785">
    <property type="entry name" value="Winged helix' DNA-binding domain"/>
    <property type="match status" value="1"/>
</dbReference>
<proteinExistence type="inferred from homology"/>
<accession>B2IRA0</accession>
<gene>
    <name evidence="1" type="primary">codY</name>
    <name type="ordered locus">SPCG_1567</name>
</gene>
<feature type="chain" id="PRO_1000130459" description="Global transcriptional regulator CodY">
    <location>
        <begin position="1"/>
        <end position="262"/>
    </location>
</feature>
<feature type="DNA-binding region" description="H-T-H motif" evidence="1">
    <location>
        <begin position="207"/>
        <end position="226"/>
    </location>
</feature>
<feature type="region of interest" description="GAF domain" evidence="1">
    <location>
        <begin position="1"/>
        <end position="159"/>
    </location>
</feature>
<keyword id="KW-0963">Cytoplasm</keyword>
<keyword id="KW-0238">DNA-binding</keyword>
<keyword id="KW-0678">Repressor</keyword>
<keyword id="KW-0804">Transcription</keyword>
<keyword id="KW-0805">Transcription regulation</keyword>